<proteinExistence type="inferred from homology"/>
<keyword id="KW-0325">Glycoprotein</keyword>
<keyword id="KW-0472">Membrane</keyword>
<keyword id="KW-0571">Peptide transport</keyword>
<keyword id="KW-0653">Protein transport</keyword>
<keyword id="KW-0812">Transmembrane</keyword>
<keyword id="KW-1133">Transmembrane helix</keyword>
<keyword id="KW-0813">Transport</keyword>
<keyword id="KW-0843">Virulence</keyword>
<feature type="chain" id="PRO_0000458383" description="Oligopeptide transporter phomP2">
    <location>
        <begin position="1"/>
        <end position="839"/>
    </location>
</feature>
<feature type="transmembrane region" description="Helical" evidence="1">
    <location>
        <begin position="105"/>
        <end position="125"/>
    </location>
</feature>
<feature type="transmembrane region" description="Helical" evidence="1">
    <location>
        <begin position="177"/>
        <end position="197"/>
    </location>
</feature>
<feature type="transmembrane region" description="Helical" evidence="1">
    <location>
        <begin position="210"/>
        <end position="230"/>
    </location>
</feature>
<feature type="transmembrane region" description="Helical" evidence="1">
    <location>
        <begin position="268"/>
        <end position="288"/>
    </location>
</feature>
<feature type="transmembrane region" description="Helical" evidence="1">
    <location>
        <begin position="315"/>
        <end position="335"/>
    </location>
</feature>
<feature type="transmembrane region" description="Helical" evidence="1">
    <location>
        <begin position="345"/>
        <end position="365"/>
    </location>
</feature>
<feature type="transmembrane region" description="Helical" evidence="1">
    <location>
        <begin position="415"/>
        <end position="435"/>
    </location>
</feature>
<feature type="transmembrane region" description="Helical" evidence="1">
    <location>
        <begin position="478"/>
        <end position="498"/>
    </location>
</feature>
<feature type="transmembrane region" description="Helical" evidence="1">
    <location>
        <begin position="505"/>
        <end position="525"/>
    </location>
</feature>
<feature type="transmembrane region" description="Helical" evidence="1">
    <location>
        <begin position="585"/>
        <end position="605"/>
    </location>
</feature>
<feature type="transmembrane region" description="Helical" evidence="1">
    <location>
        <begin position="665"/>
        <end position="685"/>
    </location>
</feature>
<feature type="transmembrane region" description="Helical" evidence="1">
    <location>
        <begin position="697"/>
        <end position="717"/>
    </location>
</feature>
<feature type="transmembrane region" description="Helical" evidence="1">
    <location>
        <begin position="728"/>
        <end position="748"/>
    </location>
</feature>
<feature type="transmembrane region" description="Helical" evidence="1">
    <location>
        <begin position="781"/>
        <end position="801"/>
    </location>
</feature>
<feature type="region of interest" description="Disordered" evidence="3">
    <location>
        <begin position="1"/>
        <end position="58"/>
    </location>
</feature>
<feature type="region of interest" description="Disordered" evidence="3">
    <location>
        <begin position="629"/>
        <end position="654"/>
    </location>
</feature>
<feature type="compositionally biased region" description="Low complexity" evidence="3">
    <location>
        <begin position="23"/>
        <end position="36"/>
    </location>
</feature>
<feature type="compositionally biased region" description="Basic and acidic residues" evidence="3">
    <location>
        <begin position="44"/>
        <end position="58"/>
    </location>
</feature>
<feature type="compositionally biased region" description="Gly residues" evidence="3">
    <location>
        <begin position="629"/>
        <end position="646"/>
    </location>
</feature>
<feature type="glycosylation site" description="N-linked (GlcNAc...) asparagine" evidence="2">
    <location>
        <position position="33"/>
    </location>
</feature>
<feature type="glycosylation site" description="N-linked (GlcNAc...) asparagine" evidence="2">
    <location>
        <position position="36"/>
    </location>
</feature>
<feature type="glycosylation site" description="N-linked (GlcNAc...) asparagine" evidence="2">
    <location>
        <position position="386"/>
    </location>
</feature>
<feature type="glycosylation site" description="N-linked (GlcNAc...) asparagine" evidence="2">
    <location>
        <position position="398"/>
    </location>
</feature>
<feature type="glycosylation site" description="N-linked (GlcNAc...) asparagine" evidence="2">
    <location>
        <position position="749"/>
    </location>
</feature>
<protein>
    <recommendedName>
        <fullName evidence="5">Oligopeptide transporter phomP2</fullName>
    </recommendedName>
    <alternativeName>
        <fullName evidence="5">Phomopsin biosynthesis cluster protein P2</fullName>
    </alternativeName>
</protein>
<name>PHP21_DIALO</name>
<sequence length="839" mass="92399">MEADPKVPFTDEMNIQDEHNWESGSWSSSRRSNDSNVTLLSRRSSVEQHEDERQKDSDTLFEHGDAALDAQGIADPRLKDYPIPLVAQTVHLRNDDSEPILTFRVWLLSTFWVLAGCSISTVYYFKPFSVRLSGYVVQLCTWKMGQLLASALPTRPFTVLGRRWTLNPGRWSAKEHALVVIAYWGSSYTAYGLGPLSAMELFYGKRLSSPWAITFLVTTQLTGYGLVGLYRHILVRPPSMYYPGILPTVSLFNAMHGDPRQTASSLRVFMAIASAAFVYQWLPSFVFPLLSSLPLLCWVGRGSWEAFVLGSGSLGFGLMDFSLDWNYVAFLSPLFTPLWANANRFVGAALAVWITYPVAYFSDALGSLRFPPMSSETFDTSGGLYNVSRIMTPSLELNQTALELYSTPRWSFSYAMHFFWGFASASAMVTYAVLFHGRTILKALANVWSLDGNTADDIDSEKDPYVKLTSHHARVPQAWYALLLAVCLCLGTIQLYAGDMQLPWWGLQLVVAISALFTLPCGMLFATANVQIGMDYVSEVLAGALFPGRPVAVLTATVYGRQVLEQCLNLASDLKLGFYMKIPEWELLVAQVYGTLLGPFVNWAVMRLIIDTQGAAALLGREGGDGKRQGLGLGQGGGGGGGGGGQQQRAAGAHTTEWNALKTKNFFSSSVIWGVMGPARVFGGGDGSPSSSSPYRWLLPSGFAVGAAAVLLLWLIHKARPAWRVQQWPLHPAIIFHGASLFPVFPTTNLTSSMAAAVASMGVMRRWHPRWFARWNYLLGAGLDCGAQLVQMVLGVAFLVFNRHGQQMVRMPHWWGNDAVAVDQCFPPPDLPSVIMSPM</sequence>
<reference key="1">
    <citation type="journal article" date="2021" name="Angew. Chem. Int. Ed.">
        <title>Biosynthetic studies of phomopsins unveil posttranslational installation of dehydroamino acids by ustYa family proteins.</title>
        <authorList>
            <person name="Sogahata K."/>
            <person name="Ozaki T."/>
            <person name="Igarashi Y."/>
            <person name="Naganuma Y."/>
            <person name="Liu C."/>
            <person name="Minami A."/>
            <person name="Oikawa H."/>
        </authorList>
    </citation>
    <scope>NUCLEOTIDE SEQUENCE [GENOMIC DNA]</scope>
    <scope>FUNCTION</scope>
    <source>
        <strain>ATCC 26115 / IMI 115107 / C 1557</strain>
    </source>
</reference>
<evidence type="ECO:0000255" key="1"/>
<evidence type="ECO:0000255" key="2">
    <source>
        <dbReference type="PROSITE-ProRule" id="PRU00498"/>
    </source>
</evidence>
<evidence type="ECO:0000256" key="3">
    <source>
        <dbReference type="SAM" id="MobiDB-lite"/>
    </source>
</evidence>
<evidence type="ECO:0000269" key="4">
    <source>
    </source>
</evidence>
<evidence type="ECO:0000303" key="5">
    <source>
    </source>
</evidence>
<evidence type="ECO:0000305" key="6"/>
<dbReference type="EMBL" id="LC646903">
    <property type="protein sequence ID" value="BDA39147.1"/>
    <property type="molecule type" value="Genomic_DNA"/>
</dbReference>
<dbReference type="GO" id="GO:0016020">
    <property type="term" value="C:membrane"/>
    <property type="evidence" value="ECO:0007669"/>
    <property type="project" value="UniProtKB-SubCell"/>
</dbReference>
<dbReference type="GO" id="GO:0035673">
    <property type="term" value="F:oligopeptide transmembrane transporter activity"/>
    <property type="evidence" value="ECO:0007669"/>
    <property type="project" value="InterPro"/>
</dbReference>
<dbReference type="GO" id="GO:0015031">
    <property type="term" value="P:protein transport"/>
    <property type="evidence" value="ECO:0007669"/>
    <property type="project" value="UniProtKB-KW"/>
</dbReference>
<dbReference type="InterPro" id="IPR004648">
    <property type="entry name" value="Oligpept_transpt"/>
</dbReference>
<dbReference type="InterPro" id="IPR004813">
    <property type="entry name" value="OPT"/>
</dbReference>
<dbReference type="NCBIfam" id="TIGR00728">
    <property type="entry name" value="OPT_sfam"/>
    <property type="match status" value="1"/>
</dbReference>
<dbReference type="PANTHER" id="PTHR22601">
    <property type="entry name" value="ISP4 LIKE PROTEIN"/>
    <property type="match status" value="1"/>
</dbReference>
<dbReference type="Pfam" id="PF03169">
    <property type="entry name" value="OPT"/>
    <property type="match status" value="2"/>
</dbReference>
<organism>
    <name type="scientific">Diaporthe leptostromiformis</name>
    <name type="common">Lupinosis disease fungus</name>
    <name type="synonym">Phomopsis leptostromiformis</name>
    <dbReference type="NCBI Taxonomy" id="291059"/>
    <lineage>
        <taxon>Eukaryota</taxon>
        <taxon>Fungi</taxon>
        <taxon>Dikarya</taxon>
        <taxon>Ascomycota</taxon>
        <taxon>Pezizomycotina</taxon>
        <taxon>Sordariomycetes</taxon>
        <taxon>Sordariomycetidae</taxon>
        <taxon>Diaporthales</taxon>
        <taxon>Diaporthaceae</taxon>
        <taxon>Diaporthe</taxon>
    </lineage>
</organism>
<accession>A0A8J9RIY3</accession>
<comment type="function">
    <text evidence="4">Oligopeptide transporter; part of the gene cluster that mediates the biosynthesis of the phomopsins, a group of hexapeptide mycotoxins which infects lupins and causes lupinosis disease in livestock.</text>
</comment>
<comment type="subcellular location">
    <subcellularLocation>
        <location evidence="1">Membrane</location>
        <topology evidence="1">Multi-pass membrane protein</topology>
    </subcellularLocation>
</comment>
<comment type="similarity">
    <text evidence="6">Belongs to the oligopeptide OPT transporter family.</text>
</comment>
<gene>
    <name evidence="5" type="primary">phomP2</name>
</gene>